<comment type="function">
    <text evidence="4">Involved in the production of polyhydroxyalkonic acids (PHAs), which are water-insoluble biopolymers used as intracellular energy reserve material when cells grow under conditions of nutrient limitation. PHAs are composed primarily of 3-hydroxybutyric acid (3HB) and 3-hydroxyvaleric acid (3HV). Required for the production of poly-beta-hydroxybutyrate (PHB) and poly(beta-hydroxybutyrate-co-beta-hydroxyvalerate) (PHBV).</text>
</comment>
<comment type="pathway">
    <text>Biopolymer metabolism; poly-(R)-3-hydroxybutanoate biosynthesis.</text>
</comment>
<comment type="subunit">
    <text evidence="1">Heterodimer with PhaE.</text>
</comment>
<comment type="biotechnology">
    <text>PHB and PHBV are desirable bioplastic due to their biodegradability, biocompatibility, and mechanical properties. However, PHBV has better mechanical properties than PHB.</text>
</comment>
<comment type="similarity">
    <text evidence="5">Belongs to the PHA/PHB synthase family.</text>
</comment>
<reference key="1">
    <citation type="journal article" date="2004" name="Genome Res.">
        <title>Genome sequence of Haloarcula marismortui: a halophilic archaeon from the Dead Sea.</title>
        <authorList>
            <person name="Baliga N.S."/>
            <person name="Bonneau R."/>
            <person name="Facciotti M.T."/>
            <person name="Pan M."/>
            <person name="Glusman G."/>
            <person name="Deutsch E.W."/>
            <person name="Shannon P."/>
            <person name="Chiu Y."/>
            <person name="Weng R.S."/>
            <person name="Gan R.R."/>
            <person name="Hung P."/>
            <person name="Date S.V."/>
            <person name="Marcotte E."/>
            <person name="Hood L."/>
            <person name="Ng W.V."/>
        </authorList>
    </citation>
    <scope>NUCLEOTIDE SEQUENCE [LARGE SCALE GENOMIC DNA]</scope>
    <source>
        <strain>ATCC 43049 / DSM 3752 / JCM 8966 / VKM B-1809</strain>
    </source>
</reference>
<reference key="2">
    <citation type="journal article" date="2007" name="Appl. Environ. Microbiol.">
        <title>Molecular characterization of the phaECHm genes, required for biosynthesis of poly(3-hydroxybutyrate) in the extremely halophilic archaeon Haloarcula marismortui.</title>
        <authorList>
            <person name="Han J."/>
            <person name="Lu Q."/>
            <person name="Zhou L."/>
            <person name="Zhou J."/>
            <person name="Xiang H."/>
        </authorList>
    </citation>
    <scope>FUNCTION</scope>
    <source>
        <strain>ATCC 43049 / DSM 3752 / JCM 8966 / VKM B-1809</strain>
    </source>
</reference>
<proteinExistence type="evidence at protein level"/>
<feature type="chain" id="PRO_0000428870" description="Poly(3-hydroxyalkanoate) polymerase subunit PhaC">
    <location>
        <begin position="1"/>
        <end position="475"/>
    </location>
</feature>
<feature type="domain" description="AB hydrolase-1" evidence="2">
    <location>
        <begin position="82"/>
        <end position="348"/>
    </location>
</feature>
<feature type="region of interest" description="Disordered" evidence="3">
    <location>
        <begin position="369"/>
        <end position="431"/>
    </location>
</feature>
<feature type="compositionally biased region" description="Acidic residues" evidence="3">
    <location>
        <begin position="375"/>
        <end position="423"/>
    </location>
</feature>
<feature type="active site" description="Charge relay system" evidence="2">
    <location>
        <position position="162"/>
    </location>
</feature>
<feature type="active site" description="Charge relay system" evidence="2">
    <location>
        <position position="317"/>
    </location>
</feature>
<feature type="active site" description="Charge relay system" evidence="2">
    <location>
        <position position="346"/>
    </location>
</feature>
<keyword id="KW-0012">Acyltransferase</keyword>
<keyword id="KW-0577">PHA biosynthesis</keyword>
<keyword id="KW-0583">PHB biosynthesis</keyword>
<keyword id="KW-1185">Reference proteome</keyword>
<keyword id="KW-0808">Transferase</keyword>
<sequence length="475" mass="53121">MSSNPFNPFEAALNWQRKTLENMTDAAETSQVADERLELMESVDVGQTPSNVVYEENKLELLHYDAEAAGIEVPDEEKEDVPILIVYALINRPYILDLQEERSVVRRLLEAGHDVYLIDWNEPSRLDQHLTLDDYVNRYMDNCVDVVRDRSGQDAINILGYCMGGTMSVMYTALHKEKVNTLGLMAAGLCFDHTGGVLEEWGSEEYYSPQDVVDTFGNVPADMLDIGFALMDPVENYVTKYIRFAENMENEGFVENFGRMEQWLGDGIDVAGEAYVQFLEDVYQDNKLYKNELELDGKHVDLDNIDMPVLQLMGEYDHLIPPEASKPFNDVIASDDTRTIEFSTGHIGLSVSSSTHADLWPEVAEWYSERSTGSEEVDIEVESPEAAEDDAVDQSELTDIDVDATDDVDADATEDDATDEPADVDSVSGIGPTYAERLHDAGIHSVADLAEYDAADLADIAETTESRAQDWLDQL</sequence>
<accession>Q5UYM0</accession>
<dbReference type="EC" id="2.3.1.-"/>
<dbReference type="EMBL" id="AY596297">
    <property type="protein sequence ID" value="AAV47633.1"/>
    <property type="molecule type" value="Genomic_DNA"/>
</dbReference>
<dbReference type="RefSeq" id="WP_011224492.1">
    <property type="nucleotide sequence ID" value="NC_006396.1"/>
</dbReference>
<dbReference type="SMR" id="Q5UYM0"/>
<dbReference type="STRING" id="272569.rrnAC2886"/>
<dbReference type="ESTHER" id="halma-q5uym0">
    <property type="family name" value="PHA_synth_III_C"/>
</dbReference>
<dbReference type="PaxDb" id="272569-rrnAC2886"/>
<dbReference type="EnsemblBacteria" id="AAV47633">
    <property type="protein sequence ID" value="AAV47633"/>
    <property type="gene ID" value="rrnAC2886"/>
</dbReference>
<dbReference type="GeneID" id="40153729"/>
<dbReference type="KEGG" id="hma:rrnAC2886"/>
<dbReference type="PATRIC" id="fig|272569.17.peg.3454"/>
<dbReference type="eggNOG" id="arCOG06344">
    <property type="taxonomic scope" value="Archaea"/>
</dbReference>
<dbReference type="HOGENOM" id="CLU_035017_2_0_2"/>
<dbReference type="UniPathway" id="UPA00917"/>
<dbReference type="Proteomes" id="UP000001169">
    <property type="component" value="Chromosome I"/>
</dbReference>
<dbReference type="GO" id="GO:0016746">
    <property type="term" value="F:acyltransferase activity"/>
    <property type="evidence" value="ECO:0007669"/>
    <property type="project" value="UniProtKB-KW"/>
</dbReference>
<dbReference type="GO" id="GO:0000166">
    <property type="term" value="F:nucleotide binding"/>
    <property type="evidence" value="ECO:0007669"/>
    <property type="project" value="InterPro"/>
</dbReference>
<dbReference type="GO" id="GO:0042621">
    <property type="term" value="P:poly(3-hydroxyalkanoate) biosynthetic process"/>
    <property type="evidence" value="ECO:0007669"/>
    <property type="project" value="UniProtKB-KW"/>
</dbReference>
<dbReference type="GO" id="GO:0042619">
    <property type="term" value="P:poly-hydroxybutyrate biosynthetic process"/>
    <property type="evidence" value="ECO:0007669"/>
    <property type="project" value="UniProtKB-KW"/>
</dbReference>
<dbReference type="Gene3D" id="1.10.150.20">
    <property type="entry name" value="5' to 3' exonuclease, C-terminal subdomain"/>
    <property type="match status" value="1"/>
</dbReference>
<dbReference type="Gene3D" id="3.40.50.1820">
    <property type="entry name" value="alpha/beta hydrolase"/>
    <property type="match status" value="1"/>
</dbReference>
<dbReference type="InterPro" id="IPR000073">
    <property type="entry name" value="AB_hydrolase_1"/>
</dbReference>
<dbReference type="InterPro" id="IPR029058">
    <property type="entry name" value="AB_hydrolase_fold"/>
</dbReference>
<dbReference type="InterPro" id="IPR010995">
    <property type="entry name" value="DNA_repair_Rad51/TF_NusA_a-hlx"/>
</dbReference>
<dbReference type="InterPro" id="IPR051321">
    <property type="entry name" value="PHA/PHB_synthase"/>
</dbReference>
<dbReference type="InterPro" id="IPR010125">
    <property type="entry name" value="PHA_synth_III_C"/>
</dbReference>
<dbReference type="NCBIfam" id="TIGR01836">
    <property type="entry name" value="PHA_synth_III_C"/>
    <property type="match status" value="1"/>
</dbReference>
<dbReference type="PANTHER" id="PTHR36837">
    <property type="entry name" value="POLY(3-HYDROXYALKANOATE) POLYMERASE SUBUNIT PHAC"/>
    <property type="match status" value="1"/>
</dbReference>
<dbReference type="PANTHER" id="PTHR36837:SF2">
    <property type="entry name" value="POLY(3-HYDROXYALKANOATE) POLYMERASE SUBUNIT PHAC"/>
    <property type="match status" value="1"/>
</dbReference>
<dbReference type="Pfam" id="PF00561">
    <property type="entry name" value="Abhydrolase_1"/>
    <property type="match status" value="1"/>
</dbReference>
<dbReference type="Pfam" id="PF14520">
    <property type="entry name" value="HHH_5"/>
    <property type="match status" value="1"/>
</dbReference>
<dbReference type="SUPFAM" id="SSF53474">
    <property type="entry name" value="alpha/beta-Hydrolases"/>
    <property type="match status" value="1"/>
</dbReference>
<dbReference type="SUPFAM" id="SSF47794">
    <property type="entry name" value="Rad51 N-terminal domain-like"/>
    <property type="match status" value="1"/>
</dbReference>
<evidence type="ECO:0000250" key="1"/>
<evidence type="ECO:0000255" key="2"/>
<evidence type="ECO:0000256" key="3">
    <source>
        <dbReference type="SAM" id="MobiDB-lite"/>
    </source>
</evidence>
<evidence type="ECO:0000269" key="4">
    <source>
    </source>
</evidence>
<evidence type="ECO:0000305" key="5"/>
<organism>
    <name type="scientific">Haloarcula marismortui (strain ATCC 43049 / DSM 3752 / JCM 8966 / VKM B-1809)</name>
    <name type="common">Halobacterium marismortui</name>
    <dbReference type="NCBI Taxonomy" id="272569"/>
    <lineage>
        <taxon>Archaea</taxon>
        <taxon>Methanobacteriati</taxon>
        <taxon>Methanobacteriota</taxon>
        <taxon>Stenosarchaea group</taxon>
        <taxon>Halobacteria</taxon>
        <taxon>Halobacteriales</taxon>
        <taxon>Haloarculaceae</taxon>
        <taxon>Haloarcula</taxon>
    </lineage>
</organism>
<protein>
    <recommendedName>
        <fullName>Poly(3-hydroxyalkanoate) polymerase subunit PhaC</fullName>
        <shortName>PHA polymerase</shortName>
        <ecNumber>2.3.1.-</ecNumber>
    </recommendedName>
    <alternativeName>
        <fullName>PHB synthase subunit PhaC</fullName>
    </alternativeName>
    <alternativeName>
        <fullName>Poly(3-hydroxybutyrate) polymerase subunit PhaC</fullName>
        <shortName>PHB polymerase</shortName>
    </alternativeName>
    <alternativeName>
        <fullName>Polyhydroxyalkanoic acid synthase subunit PhaC</fullName>
        <shortName>PHA synthase</shortName>
    </alternativeName>
</protein>
<gene>
    <name type="primary">phaC</name>
    <name type="ordered locus">rrnAC2886</name>
</gene>
<name>PHAC_HALMA</name>